<protein>
    <recommendedName>
        <fullName evidence="2">Purine nucleoside phosphorylase DeoD-type</fullName>
        <shortName evidence="2">PNP</shortName>
        <ecNumber evidence="2">2.4.2.1</ecNumber>
    </recommendedName>
</protein>
<organism>
    <name type="scientific">Streptococcus pneumoniae (strain 70585)</name>
    <dbReference type="NCBI Taxonomy" id="488221"/>
    <lineage>
        <taxon>Bacteria</taxon>
        <taxon>Bacillati</taxon>
        <taxon>Bacillota</taxon>
        <taxon>Bacilli</taxon>
        <taxon>Lactobacillales</taxon>
        <taxon>Streptococcaceae</taxon>
        <taxon>Streptococcus</taxon>
    </lineage>
</organism>
<comment type="function">
    <text evidence="2">Catalyzes the reversible phosphorolytic breakdown of the N-glycosidic bond in the beta-(deoxy)ribonucleoside molecules, with the formation of the corresponding free purine bases and pentose-1-phosphate.</text>
</comment>
<comment type="catalytic activity">
    <reaction evidence="2">
        <text>a purine D-ribonucleoside + phosphate = a purine nucleobase + alpha-D-ribose 1-phosphate</text>
        <dbReference type="Rhea" id="RHEA:19805"/>
        <dbReference type="ChEBI" id="CHEBI:26386"/>
        <dbReference type="ChEBI" id="CHEBI:43474"/>
        <dbReference type="ChEBI" id="CHEBI:57720"/>
        <dbReference type="ChEBI" id="CHEBI:142355"/>
        <dbReference type="EC" id="2.4.2.1"/>
    </reaction>
</comment>
<comment type="catalytic activity">
    <reaction evidence="2">
        <text>a purine 2'-deoxy-D-ribonucleoside + phosphate = a purine nucleobase + 2-deoxy-alpha-D-ribose 1-phosphate</text>
        <dbReference type="Rhea" id="RHEA:36431"/>
        <dbReference type="ChEBI" id="CHEBI:26386"/>
        <dbReference type="ChEBI" id="CHEBI:43474"/>
        <dbReference type="ChEBI" id="CHEBI:57259"/>
        <dbReference type="ChEBI" id="CHEBI:142361"/>
        <dbReference type="EC" id="2.4.2.1"/>
    </reaction>
</comment>
<comment type="subunit">
    <text evidence="2">Homohexamer; trimer of homodimers.</text>
</comment>
<comment type="similarity">
    <text evidence="2">Belongs to the PNP/UDP phosphorylase family.</text>
</comment>
<evidence type="ECO:0000250" key="1">
    <source>
        <dbReference type="UniProtKB" id="P50389"/>
    </source>
</evidence>
<evidence type="ECO:0000255" key="2">
    <source>
        <dbReference type="HAMAP-Rule" id="MF_01627"/>
    </source>
</evidence>
<keyword id="KW-0328">Glycosyltransferase</keyword>
<keyword id="KW-0808">Transferase</keyword>
<gene>
    <name evidence="2" type="primary">deoD</name>
    <name type="ordered locus">SP70585_0872</name>
</gene>
<reference key="1">
    <citation type="journal article" date="2010" name="Genome Biol.">
        <title>Structure and dynamics of the pan-genome of Streptococcus pneumoniae and closely related species.</title>
        <authorList>
            <person name="Donati C."/>
            <person name="Hiller N.L."/>
            <person name="Tettelin H."/>
            <person name="Muzzi A."/>
            <person name="Croucher N.J."/>
            <person name="Angiuoli S.V."/>
            <person name="Oggioni M."/>
            <person name="Dunning Hotopp J.C."/>
            <person name="Hu F.Z."/>
            <person name="Riley D.R."/>
            <person name="Covacci A."/>
            <person name="Mitchell T.J."/>
            <person name="Bentley S.D."/>
            <person name="Kilian M."/>
            <person name="Ehrlich G.D."/>
            <person name="Rappuoli R."/>
            <person name="Moxon E.R."/>
            <person name="Masignani V."/>
        </authorList>
    </citation>
    <scope>NUCLEOTIDE SEQUENCE [LARGE SCALE GENOMIC DNA]</scope>
    <source>
        <strain>70585</strain>
    </source>
</reference>
<proteinExistence type="inferred from homology"/>
<feature type="chain" id="PRO_1000186227" description="Purine nucleoside phosphorylase DeoD-type">
    <location>
        <begin position="1"/>
        <end position="236"/>
    </location>
</feature>
<feature type="active site" description="Proton donor" evidence="2">
    <location>
        <position position="204"/>
    </location>
</feature>
<feature type="binding site" evidence="1">
    <location>
        <position position="4"/>
    </location>
    <ligand>
        <name>a purine D-ribonucleoside</name>
        <dbReference type="ChEBI" id="CHEBI:142355"/>
        <note>ligand shared between dimeric partners</note>
    </ligand>
</feature>
<feature type="binding site" description="in other chain" evidence="1">
    <location>
        <position position="20"/>
    </location>
    <ligand>
        <name>phosphate</name>
        <dbReference type="ChEBI" id="CHEBI:43474"/>
        <note>ligand shared between dimeric partners</note>
    </ligand>
</feature>
<feature type="binding site" description="in other chain" evidence="1">
    <location>
        <position position="24"/>
    </location>
    <ligand>
        <name>phosphate</name>
        <dbReference type="ChEBI" id="CHEBI:43474"/>
        <note>ligand shared between dimeric partners</note>
    </ligand>
</feature>
<feature type="binding site" evidence="1">
    <location>
        <position position="43"/>
    </location>
    <ligand>
        <name>phosphate</name>
        <dbReference type="ChEBI" id="CHEBI:43474"/>
        <note>ligand shared between dimeric partners</note>
    </ligand>
</feature>
<feature type="binding site" description="in other chain" evidence="1">
    <location>
        <begin position="87"/>
        <end position="90"/>
    </location>
    <ligand>
        <name>phosphate</name>
        <dbReference type="ChEBI" id="CHEBI:43474"/>
        <note>ligand shared between dimeric partners</note>
    </ligand>
</feature>
<feature type="binding site" description="in other chain" evidence="1">
    <location>
        <begin position="179"/>
        <end position="181"/>
    </location>
    <ligand>
        <name>a purine D-ribonucleoside</name>
        <dbReference type="ChEBI" id="CHEBI:142355"/>
        <note>ligand shared between dimeric partners</note>
    </ligand>
</feature>
<feature type="binding site" description="in other chain" evidence="1">
    <location>
        <begin position="203"/>
        <end position="204"/>
    </location>
    <ligand>
        <name>a purine D-ribonucleoside</name>
        <dbReference type="ChEBI" id="CHEBI:142355"/>
        <note>ligand shared between dimeric partners</note>
    </ligand>
</feature>
<feature type="site" description="Important for catalytic activity" evidence="2">
    <location>
        <position position="218"/>
    </location>
</feature>
<name>DEOD_STRP7</name>
<dbReference type="EC" id="2.4.2.1" evidence="2"/>
<dbReference type="EMBL" id="CP000918">
    <property type="protein sequence ID" value="ACO16702.1"/>
    <property type="molecule type" value="Genomic_DNA"/>
</dbReference>
<dbReference type="RefSeq" id="WP_000022100.1">
    <property type="nucleotide sequence ID" value="NC_012468.1"/>
</dbReference>
<dbReference type="SMR" id="C1C6H0"/>
<dbReference type="GeneID" id="45653806"/>
<dbReference type="KEGG" id="snm:SP70585_0872"/>
<dbReference type="HOGENOM" id="CLU_068457_2_0_9"/>
<dbReference type="Proteomes" id="UP000002211">
    <property type="component" value="Chromosome"/>
</dbReference>
<dbReference type="GO" id="GO:0005829">
    <property type="term" value="C:cytosol"/>
    <property type="evidence" value="ECO:0007669"/>
    <property type="project" value="TreeGrafter"/>
</dbReference>
<dbReference type="GO" id="GO:0004731">
    <property type="term" value="F:purine-nucleoside phosphorylase activity"/>
    <property type="evidence" value="ECO:0007669"/>
    <property type="project" value="UniProtKB-UniRule"/>
</dbReference>
<dbReference type="GO" id="GO:0006152">
    <property type="term" value="P:purine nucleoside catabolic process"/>
    <property type="evidence" value="ECO:0007669"/>
    <property type="project" value="TreeGrafter"/>
</dbReference>
<dbReference type="CDD" id="cd09006">
    <property type="entry name" value="PNP_EcPNPI-like"/>
    <property type="match status" value="1"/>
</dbReference>
<dbReference type="Gene3D" id="3.40.50.1580">
    <property type="entry name" value="Nucleoside phosphorylase domain"/>
    <property type="match status" value="1"/>
</dbReference>
<dbReference type="HAMAP" id="MF_01627">
    <property type="entry name" value="Pur_nucleosid_phosp"/>
    <property type="match status" value="1"/>
</dbReference>
<dbReference type="InterPro" id="IPR004402">
    <property type="entry name" value="DeoD-type"/>
</dbReference>
<dbReference type="InterPro" id="IPR018016">
    <property type="entry name" value="Nucleoside_phosphorylase_CS"/>
</dbReference>
<dbReference type="InterPro" id="IPR000845">
    <property type="entry name" value="Nucleoside_phosphorylase_d"/>
</dbReference>
<dbReference type="InterPro" id="IPR035994">
    <property type="entry name" value="Nucleoside_phosphorylase_sf"/>
</dbReference>
<dbReference type="NCBIfam" id="TIGR00107">
    <property type="entry name" value="deoD"/>
    <property type="match status" value="1"/>
</dbReference>
<dbReference type="NCBIfam" id="NF004489">
    <property type="entry name" value="PRK05819.1"/>
    <property type="match status" value="1"/>
</dbReference>
<dbReference type="PANTHER" id="PTHR43691:SF11">
    <property type="entry name" value="FI09636P-RELATED"/>
    <property type="match status" value="1"/>
</dbReference>
<dbReference type="PANTHER" id="PTHR43691">
    <property type="entry name" value="URIDINE PHOSPHORYLASE"/>
    <property type="match status" value="1"/>
</dbReference>
<dbReference type="Pfam" id="PF01048">
    <property type="entry name" value="PNP_UDP_1"/>
    <property type="match status" value="1"/>
</dbReference>
<dbReference type="SUPFAM" id="SSF53167">
    <property type="entry name" value="Purine and uridine phosphorylases"/>
    <property type="match status" value="1"/>
</dbReference>
<dbReference type="PROSITE" id="PS01232">
    <property type="entry name" value="PNP_UDP_1"/>
    <property type="match status" value="1"/>
</dbReference>
<accession>C1C6H0</accession>
<sequence length="236" mass="26126">MSIHIAAQQGEIADKILLPGDPLRAKFIAENFLGDAVCFNEVRNMFGYTGTYKGHRVSVMGTGMGMPSISIYARELIVDYGVKKLIRVGTAGSLNEEVHVRELVLAQAAATNSNIVRNDWPQYDFPQIASFDLLDKAYHIAKELGMTTHVGNVLSSDVFYSNYFEKNIELGKWGVKAVEMEAAALYYLAAQYHVDALAIMTISDSLVNPDEDTTAEERQNTFTDMMKVGLETLIAE</sequence>